<gene>
    <name type="primary">copA</name>
    <name type="synonym">incA</name>
    <name type="synonym">repA3</name>
</gene>
<name>COPA1_ECOLX</name>
<dbReference type="EMBL" id="J01762">
    <property type="protein sequence ID" value="AAA92256.1"/>
    <property type="molecule type" value="Genomic_DNA"/>
</dbReference>
<dbReference type="EMBL" id="M26840">
    <property type="protein sequence ID" value="AAA26066.1"/>
    <property type="molecule type" value="Genomic_DNA"/>
</dbReference>
<dbReference type="PIR" id="B93253">
    <property type="entry name" value="QQEC71"/>
</dbReference>
<dbReference type="SMR" id="P03854"/>
<dbReference type="GO" id="GO:0006276">
    <property type="term" value="P:plasmid maintenance"/>
    <property type="evidence" value="ECO:0007669"/>
    <property type="project" value="UniProtKB-KW"/>
</dbReference>
<accession>P03854</accession>
<sequence length="61" mass="7179">MWIYRSQKSKNPDNLLQLLRVRKDYRGPLKPYSQQFSYAGSIVICPEKFKTSFCARSFCAL</sequence>
<feature type="chain" id="PRO_0000068288" description="Protein CopA/IncA">
    <location>
        <begin position="1"/>
        <end position="61"/>
    </location>
</feature>
<reference key="1">
    <citation type="journal article" date="1981" name="Nature">
        <title>Role of RNA transcripts in replication incompatibility and copy number control in antibiotic resistance plasmid derivatives.</title>
        <authorList>
            <person name="Rosen J."/>
            <person name="Ryder T."/>
            <person name="Ohtsubo H."/>
            <person name="Ohtsubo E."/>
        </authorList>
    </citation>
    <scope>NUCLEOTIDE SEQUENCE [GENOMIC DNA]</scope>
    <source>
        <plasmid>IncFII R1</plasmid>
        <plasmid>IncFII R100 (NR1)</plasmid>
    </source>
</reference>
<reference key="2">
    <citation type="journal article" date="1986" name="Adv. Biophys.">
        <title>DNA replication of the resistance plasmid R100 and its control.</title>
        <authorList>
            <person name="Ohtsubo H."/>
            <person name="Ryder T.B."/>
            <person name="Maeda Y."/>
            <person name="Armstrong K."/>
            <person name="Ohtsubo E."/>
        </authorList>
    </citation>
    <scope>NUCLEOTIDE SEQUENCE [GENOMIC DNA]</scope>
    <source>
        <plasmid>IncFII R100 (NR1)</plasmid>
    </source>
</reference>
<comment type="function">
    <text>Controls the copy number in gene replication.</text>
</comment>
<organism>
    <name type="scientific">Escherichia coli</name>
    <dbReference type="NCBI Taxonomy" id="562"/>
    <lineage>
        <taxon>Bacteria</taxon>
        <taxon>Pseudomonadati</taxon>
        <taxon>Pseudomonadota</taxon>
        <taxon>Gammaproteobacteria</taxon>
        <taxon>Enterobacterales</taxon>
        <taxon>Enterobacteriaceae</taxon>
        <taxon>Escherichia</taxon>
    </lineage>
</organism>
<keyword id="KW-0614">Plasmid</keyword>
<keyword id="KW-0615">Plasmid copy control</keyword>
<proteinExistence type="predicted"/>
<geneLocation type="plasmid">
    <name>IncFII R100</name>
    <name>NR1</name>
</geneLocation>
<geneLocation type="plasmid">
    <name>IncFII R1</name>
</geneLocation>
<protein>
    <recommendedName>
        <fullName>Protein CopA/IncA</fullName>
    </recommendedName>
    <alternativeName>
        <fullName>Protein RepA3</fullName>
    </alternativeName>
</protein>